<keyword id="KW-0963">Cytoplasm</keyword>
<keyword id="KW-0269">Exonuclease</keyword>
<keyword id="KW-0378">Hydrolase</keyword>
<keyword id="KW-0540">Nuclease</keyword>
<comment type="function">
    <text evidence="1">3'-to-5' exoribonuclease specific for small oligoribonucleotides.</text>
</comment>
<comment type="subcellular location">
    <subcellularLocation>
        <location evidence="1">Cytoplasm</location>
    </subcellularLocation>
</comment>
<comment type="similarity">
    <text evidence="1">Belongs to the oligoribonuclease family.</text>
</comment>
<name>ORN_VIBVU</name>
<sequence length="181" mass="20853">MSFSDQNLIWIDLEMTGLDPDVHKIIEIASIVTDSELNILAEGPVLAIHQSEEELAKMDEWCTNTHTGSGLVERVRGSQITEQEAVEQTIAFLEKWVPKGVSPICGNSIGQDRRFLYRHMPELEGYFHYRYIDVSTLKELTRRWNPEVLKGFSKQGTHLALDDIRESIAELKFYRQTIFKI</sequence>
<reference key="1">
    <citation type="submission" date="2002-12" db="EMBL/GenBank/DDBJ databases">
        <title>Complete genome sequence of Vibrio vulnificus CMCP6.</title>
        <authorList>
            <person name="Rhee J.H."/>
            <person name="Kim S.Y."/>
            <person name="Chung S.S."/>
            <person name="Kim J.J."/>
            <person name="Moon Y.H."/>
            <person name="Jeong H."/>
            <person name="Choy H.E."/>
        </authorList>
    </citation>
    <scope>NUCLEOTIDE SEQUENCE [LARGE SCALE GENOMIC DNA]</scope>
    <source>
        <strain>CMCP6</strain>
    </source>
</reference>
<feature type="chain" id="PRO_0000111080" description="Oligoribonuclease">
    <location>
        <begin position="1"/>
        <end position="181"/>
    </location>
</feature>
<feature type="domain" description="Exonuclease" evidence="1">
    <location>
        <begin position="8"/>
        <end position="171"/>
    </location>
</feature>
<feature type="active site" evidence="1">
    <location>
        <position position="129"/>
    </location>
</feature>
<proteinExistence type="inferred from homology"/>
<organism>
    <name type="scientific">Vibrio vulnificus (strain CMCP6)</name>
    <dbReference type="NCBI Taxonomy" id="216895"/>
    <lineage>
        <taxon>Bacteria</taxon>
        <taxon>Pseudomonadati</taxon>
        <taxon>Pseudomonadota</taxon>
        <taxon>Gammaproteobacteria</taxon>
        <taxon>Vibrionales</taxon>
        <taxon>Vibrionaceae</taxon>
        <taxon>Vibrio</taxon>
    </lineage>
</organism>
<accession>Q8DCV6</accession>
<gene>
    <name evidence="1" type="primary">orn</name>
    <name type="ordered locus">VV1_1286</name>
</gene>
<dbReference type="EC" id="3.1.15.-" evidence="1"/>
<dbReference type="EMBL" id="AE016795">
    <property type="protein sequence ID" value="AAO09741.2"/>
    <property type="molecule type" value="Genomic_DNA"/>
</dbReference>
<dbReference type="RefSeq" id="WP_011079270.1">
    <property type="nucleotide sequence ID" value="NC_004459.3"/>
</dbReference>
<dbReference type="SMR" id="Q8DCV6"/>
<dbReference type="KEGG" id="vvu:VV1_1286"/>
<dbReference type="HOGENOM" id="CLU_064761_2_0_6"/>
<dbReference type="Proteomes" id="UP000002275">
    <property type="component" value="Chromosome 1"/>
</dbReference>
<dbReference type="GO" id="GO:0005737">
    <property type="term" value="C:cytoplasm"/>
    <property type="evidence" value="ECO:0007669"/>
    <property type="project" value="UniProtKB-SubCell"/>
</dbReference>
<dbReference type="GO" id="GO:0000175">
    <property type="term" value="F:3'-5'-RNA exonuclease activity"/>
    <property type="evidence" value="ECO:0007669"/>
    <property type="project" value="InterPro"/>
</dbReference>
<dbReference type="GO" id="GO:0003676">
    <property type="term" value="F:nucleic acid binding"/>
    <property type="evidence" value="ECO:0007669"/>
    <property type="project" value="InterPro"/>
</dbReference>
<dbReference type="GO" id="GO:0006259">
    <property type="term" value="P:DNA metabolic process"/>
    <property type="evidence" value="ECO:0007669"/>
    <property type="project" value="UniProtKB-ARBA"/>
</dbReference>
<dbReference type="CDD" id="cd06135">
    <property type="entry name" value="Orn"/>
    <property type="match status" value="1"/>
</dbReference>
<dbReference type="FunFam" id="3.30.420.10:FF:000003">
    <property type="entry name" value="Oligoribonuclease"/>
    <property type="match status" value="1"/>
</dbReference>
<dbReference type="Gene3D" id="3.30.420.10">
    <property type="entry name" value="Ribonuclease H-like superfamily/Ribonuclease H"/>
    <property type="match status" value="1"/>
</dbReference>
<dbReference type="HAMAP" id="MF_00045">
    <property type="entry name" value="Oligoribonuclease"/>
    <property type="match status" value="1"/>
</dbReference>
<dbReference type="InterPro" id="IPR013520">
    <property type="entry name" value="Exonuclease_RNaseT/DNA_pol3"/>
</dbReference>
<dbReference type="InterPro" id="IPR022894">
    <property type="entry name" value="Oligoribonuclease"/>
</dbReference>
<dbReference type="InterPro" id="IPR012337">
    <property type="entry name" value="RNaseH-like_sf"/>
</dbReference>
<dbReference type="InterPro" id="IPR036397">
    <property type="entry name" value="RNaseH_sf"/>
</dbReference>
<dbReference type="NCBIfam" id="NF003765">
    <property type="entry name" value="PRK05359.1"/>
    <property type="match status" value="1"/>
</dbReference>
<dbReference type="PANTHER" id="PTHR11046">
    <property type="entry name" value="OLIGORIBONUCLEASE, MITOCHONDRIAL"/>
    <property type="match status" value="1"/>
</dbReference>
<dbReference type="PANTHER" id="PTHR11046:SF0">
    <property type="entry name" value="OLIGORIBONUCLEASE, MITOCHONDRIAL"/>
    <property type="match status" value="1"/>
</dbReference>
<dbReference type="Pfam" id="PF00929">
    <property type="entry name" value="RNase_T"/>
    <property type="match status" value="1"/>
</dbReference>
<dbReference type="SMART" id="SM00479">
    <property type="entry name" value="EXOIII"/>
    <property type="match status" value="1"/>
</dbReference>
<dbReference type="SUPFAM" id="SSF53098">
    <property type="entry name" value="Ribonuclease H-like"/>
    <property type="match status" value="1"/>
</dbReference>
<protein>
    <recommendedName>
        <fullName evidence="1">Oligoribonuclease</fullName>
        <ecNumber evidence="1">3.1.15.-</ecNumber>
    </recommendedName>
</protein>
<evidence type="ECO:0000255" key="1">
    <source>
        <dbReference type="HAMAP-Rule" id="MF_00045"/>
    </source>
</evidence>